<keyword id="KW-0687">Ribonucleoprotein</keyword>
<keyword id="KW-0689">Ribosomal protein</keyword>
<sequence length="85" mass="9109">MAHKKAGGSTRNGRDSESKRLGVKCFGGELVNAGGIIVRQRGTRFHPGANVGCGRDHTLFALTTGKIQFEVKGPKNRKFVSIVAE</sequence>
<feature type="chain" id="PRO_1000017613" description="Large ribosomal subunit protein bL27">
    <location>
        <begin position="1"/>
        <end position="85"/>
    </location>
</feature>
<proteinExistence type="inferred from homology"/>
<evidence type="ECO:0000255" key="1">
    <source>
        <dbReference type="HAMAP-Rule" id="MF_00539"/>
    </source>
</evidence>
<evidence type="ECO:0000305" key="2"/>
<name>RL27_SODGM</name>
<dbReference type="EMBL" id="AP008232">
    <property type="protein sequence ID" value="BAE73639.1"/>
    <property type="molecule type" value="Genomic_DNA"/>
</dbReference>
<dbReference type="RefSeq" id="WP_011410227.1">
    <property type="nucleotide sequence ID" value="NC_007712.1"/>
</dbReference>
<dbReference type="SMR" id="Q2NW36"/>
<dbReference type="STRING" id="343509.SG0364"/>
<dbReference type="KEGG" id="sgl:SG0364"/>
<dbReference type="eggNOG" id="COG0211">
    <property type="taxonomic scope" value="Bacteria"/>
</dbReference>
<dbReference type="HOGENOM" id="CLU_095424_4_1_6"/>
<dbReference type="OrthoDB" id="9803474at2"/>
<dbReference type="Proteomes" id="UP000001932">
    <property type="component" value="Chromosome"/>
</dbReference>
<dbReference type="GO" id="GO:0022625">
    <property type="term" value="C:cytosolic large ribosomal subunit"/>
    <property type="evidence" value="ECO:0007669"/>
    <property type="project" value="TreeGrafter"/>
</dbReference>
<dbReference type="GO" id="GO:0003735">
    <property type="term" value="F:structural constituent of ribosome"/>
    <property type="evidence" value="ECO:0007669"/>
    <property type="project" value="InterPro"/>
</dbReference>
<dbReference type="GO" id="GO:0006412">
    <property type="term" value="P:translation"/>
    <property type="evidence" value="ECO:0007669"/>
    <property type="project" value="UniProtKB-UniRule"/>
</dbReference>
<dbReference type="FunFam" id="2.40.50.100:FF:000001">
    <property type="entry name" value="50S ribosomal protein L27"/>
    <property type="match status" value="1"/>
</dbReference>
<dbReference type="Gene3D" id="2.40.50.100">
    <property type="match status" value="1"/>
</dbReference>
<dbReference type="HAMAP" id="MF_00539">
    <property type="entry name" value="Ribosomal_bL27"/>
    <property type="match status" value="1"/>
</dbReference>
<dbReference type="InterPro" id="IPR001684">
    <property type="entry name" value="Ribosomal_bL27"/>
</dbReference>
<dbReference type="InterPro" id="IPR018261">
    <property type="entry name" value="Ribosomal_bL27_CS"/>
</dbReference>
<dbReference type="NCBIfam" id="TIGR00062">
    <property type="entry name" value="L27"/>
    <property type="match status" value="1"/>
</dbReference>
<dbReference type="PANTHER" id="PTHR15893:SF0">
    <property type="entry name" value="LARGE RIBOSOMAL SUBUNIT PROTEIN BL27M"/>
    <property type="match status" value="1"/>
</dbReference>
<dbReference type="PANTHER" id="PTHR15893">
    <property type="entry name" value="RIBOSOMAL PROTEIN L27"/>
    <property type="match status" value="1"/>
</dbReference>
<dbReference type="Pfam" id="PF01016">
    <property type="entry name" value="Ribosomal_L27"/>
    <property type="match status" value="1"/>
</dbReference>
<dbReference type="PRINTS" id="PR00063">
    <property type="entry name" value="RIBOSOMALL27"/>
</dbReference>
<dbReference type="SUPFAM" id="SSF110324">
    <property type="entry name" value="Ribosomal L27 protein-like"/>
    <property type="match status" value="1"/>
</dbReference>
<dbReference type="PROSITE" id="PS00831">
    <property type="entry name" value="RIBOSOMAL_L27"/>
    <property type="match status" value="1"/>
</dbReference>
<gene>
    <name evidence="1" type="primary">rpmA</name>
    <name type="ordered locus">SG0364</name>
</gene>
<reference key="1">
    <citation type="journal article" date="2006" name="Genome Res.">
        <title>Massive genome erosion and functional adaptations provide insights into the symbiotic lifestyle of Sodalis glossinidius in the tsetse host.</title>
        <authorList>
            <person name="Toh H."/>
            <person name="Weiss B.L."/>
            <person name="Perkin S.A.H."/>
            <person name="Yamashita A."/>
            <person name="Oshima K."/>
            <person name="Hattori M."/>
            <person name="Aksoy S."/>
        </authorList>
    </citation>
    <scope>NUCLEOTIDE SEQUENCE [LARGE SCALE GENOMIC DNA]</scope>
    <source>
        <strain>morsitans</strain>
    </source>
</reference>
<protein>
    <recommendedName>
        <fullName evidence="1">Large ribosomal subunit protein bL27</fullName>
    </recommendedName>
    <alternativeName>
        <fullName evidence="2">50S ribosomal protein L27</fullName>
    </alternativeName>
</protein>
<organism>
    <name type="scientific">Sodalis glossinidius (strain morsitans)</name>
    <dbReference type="NCBI Taxonomy" id="343509"/>
    <lineage>
        <taxon>Bacteria</taxon>
        <taxon>Pseudomonadati</taxon>
        <taxon>Pseudomonadota</taxon>
        <taxon>Gammaproteobacteria</taxon>
        <taxon>Enterobacterales</taxon>
        <taxon>Bruguierivoracaceae</taxon>
        <taxon>Sodalis</taxon>
    </lineage>
</organism>
<comment type="similarity">
    <text evidence="1">Belongs to the bacterial ribosomal protein bL27 family.</text>
</comment>
<accession>Q2NW36</accession>